<gene>
    <name evidence="1" type="primary">hisS</name>
    <name type="ordered locus">PAM_127</name>
</gene>
<comment type="catalytic activity">
    <reaction evidence="1">
        <text>tRNA(His) + L-histidine + ATP = L-histidyl-tRNA(His) + AMP + diphosphate + H(+)</text>
        <dbReference type="Rhea" id="RHEA:17313"/>
        <dbReference type="Rhea" id="RHEA-COMP:9665"/>
        <dbReference type="Rhea" id="RHEA-COMP:9689"/>
        <dbReference type="ChEBI" id="CHEBI:15378"/>
        <dbReference type="ChEBI" id="CHEBI:30616"/>
        <dbReference type="ChEBI" id="CHEBI:33019"/>
        <dbReference type="ChEBI" id="CHEBI:57595"/>
        <dbReference type="ChEBI" id="CHEBI:78442"/>
        <dbReference type="ChEBI" id="CHEBI:78527"/>
        <dbReference type="ChEBI" id="CHEBI:456215"/>
        <dbReference type="EC" id="6.1.1.21"/>
    </reaction>
</comment>
<comment type="subunit">
    <text evidence="1">Homodimer.</text>
</comment>
<comment type="subcellular location">
    <subcellularLocation>
        <location evidence="1">Cytoplasm</location>
    </subcellularLocation>
</comment>
<comment type="similarity">
    <text evidence="1">Belongs to the class-II aminoacyl-tRNA synthetase family.</text>
</comment>
<protein>
    <recommendedName>
        <fullName evidence="1">Histidine--tRNA ligase</fullName>
        <ecNumber evidence="1">6.1.1.21</ecNumber>
    </recommendedName>
    <alternativeName>
        <fullName evidence="1">Histidyl-tRNA synthetase</fullName>
        <shortName evidence="1">HisRS</shortName>
    </alternativeName>
</protein>
<reference key="1">
    <citation type="journal article" date="2004" name="Nat. Genet.">
        <title>Reductive evolution suggested from the complete genome sequence of a plant-pathogenic phytoplasma.</title>
        <authorList>
            <person name="Oshima K."/>
            <person name="Kakizawa S."/>
            <person name="Nishigawa H."/>
            <person name="Jung H.-Y."/>
            <person name="Wei W."/>
            <person name="Suzuki S."/>
            <person name="Arashida R."/>
            <person name="Nakata D."/>
            <person name="Miyata S."/>
            <person name="Ugaki M."/>
            <person name="Namba S."/>
        </authorList>
    </citation>
    <scope>NUCLEOTIDE SEQUENCE [LARGE SCALE GENOMIC DNA]</scope>
    <source>
        <strain>OY-M</strain>
    </source>
</reference>
<evidence type="ECO:0000255" key="1">
    <source>
        <dbReference type="HAMAP-Rule" id="MF_00127"/>
    </source>
</evidence>
<name>SYH_ONYPE</name>
<feature type="chain" id="PRO_0000136214" description="Histidine--tRNA ligase">
    <location>
        <begin position="1"/>
        <end position="422"/>
    </location>
</feature>
<sequence>MFSKIKGTYDLMSDKMVCWQKVENHIRTLFAKYHLQEIRTPIIEYRGVFDRAAQHSEMVSKETYTFADKKERFITLRPEGTAGVIRSYVENKLDKTSQLHKFFYYGPCFRYERPQKGRYRQFHQVGVEILGQSNPFLDVEVIALAYETIKSLGICDITVKINSLGCKTTYNNYLQVFKNYLQAHYQQLCPLCQERFEKNILRIWDCKNCNNEPFLKQAPRIFDHLVEDAKVRFLQVLEGLKQMNVNFELCHDLVRGLDYYTHSVFEIVYNNEQGHQAVLGGGGCYDNLVTLFGGNPSPGIGFALGMERLMSILATHSFCNKNILPSLDAFILVSVPQFFYQGLALATTLRHQGFSADLNYQFLSFSKSLKQALKQQPLYLLILGPKEFDNNQITIKNTDTQQQTTILQKDVVSYFQNNKELN</sequence>
<keyword id="KW-0030">Aminoacyl-tRNA synthetase</keyword>
<keyword id="KW-0067">ATP-binding</keyword>
<keyword id="KW-0963">Cytoplasm</keyword>
<keyword id="KW-0436">Ligase</keyword>
<keyword id="KW-0547">Nucleotide-binding</keyword>
<keyword id="KW-0648">Protein biosynthesis</keyword>
<organism>
    <name type="scientific">Onion yellows phytoplasma (strain OY-M)</name>
    <dbReference type="NCBI Taxonomy" id="262768"/>
    <lineage>
        <taxon>Bacteria</taxon>
        <taxon>Bacillati</taxon>
        <taxon>Mycoplasmatota</taxon>
        <taxon>Mollicutes</taxon>
        <taxon>Acholeplasmatales</taxon>
        <taxon>Acholeplasmataceae</taxon>
        <taxon>Candidatus Phytoplasma</taxon>
        <taxon>16SrI (Aster yellows group)</taxon>
    </lineage>
</organism>
<accession>P60918</accession>
<proteinExistence type="inferred from homology"/>
<dbReference type="EC" id="6.1.1.21" evidence="1"/>
<dbReference type="EMBL" id="AP006628">
    <property type="protein sequence ID" value="BAD04212.1"/>
    <property type="molecule type" value="Genomic_DNA"/>
</dbReference>
<dbReference type="SMR" id="P60918"/>
<dbReference type="STRING" id="262768.PAM_127"/>
<dbReference type="KEGG" id="poy:PAM_127"/>
<dbReference type="eggNOG" id="COG0124">
    <property type="taxonomic scope" value="Bacteria"/>
</dbReference>
<dbReference type="HOGENOM" id="CLU_025113_1_1_14"/>
<dbReference type="BioCyc" id="OYEL262768:G1G26-159-MONOMER"/>
<dbReference type="Proteomes" id="UP000002523">
    <property type="component" value="Chromosome"/>
</dbReference>
<dbReference type="GO" id="GO:0005737">
    <property type="term" value="C:cytoplasm"/>
    <property type="evidence" value="ECO:0007669"/>
    <property type="project" value="UniProtKB-SubCell"/>
</dbReference>
<dbReference type="GO" id="GO:0005524">
    <property type="term" value="F:ATP binding"/>
    <property type="evidence" value="ECO:0007669"/>
    <property type="project" value="UniProtKB-UniRule"/>
</dbReference>
<dbReference type="GO" id="GO:0004821">
    <property type="term" value="F:histidine-tRNA ligase activity"/>
    <property type="evidence" value="ECO:0007669"/>
    <property type="project" value="UniProtKB-UniRule"/>
</dbReference>
<dbReference type="GO" id="GO:0006427">
    <property type="term" value="P:histidyl-tRNA aminoacylation"/>
    <property type="evidence" value="ECO:0007669"/>
    <property type="project" value="UniProtKB-UniRule"/>
</dbReference>
<dbReference type="CDD" id="cd00773">
    <property type="entry name" value="HisRS-like_core"/>
    <property type="match status" value="1"/>
</dbReference>
<dbReference type="Gene3D" id="3.40.50.800">
    <property type="entry name" value="Anticodon-binding domain"/>
    <property type="match status" value="1"/>
</dbReference>
<dbReference type="Gene3D" id="3.30.930.10">
    <property type="entry name" value="Bira Bifunctional Protein, Domain 2"/>
    <property type="match status" value="1"/>
</dbReference>
<dbReference type="HAMAP" id="MF_00127">
    <property type="entry name" value="His_tRNA_synth"/>
    <property type="match status" value="1"/>
</dbReference>
<dbReference type="InterPro" id="IPR006195">
    <property type="entry name" value="aa-tRNA-synth_II"/>
</dbReference>
<dbReference type="InterPro" id="IPR045864">
    <property type="entry name" value="aa-tRNA-synth_II/BPL/LPL"/>
</dbReference>
<dbReference type="InterPro" id="IPR004154">
    <property type="entry name" value="Anticodon-bd"/>
</dbReference>
<dbReference type="InterPro" id="IPR036621">
    <property type="entry name" value="Anticodon-bd_dom_sf"/>
</dbReference>
<dbReference type="InterPro" id="IPR015807">
    <property type="entry name" value="His-tRNA-ligase"/>
</dbReference>
<dbReference type="InterPro" id="IPR041715">
    <property type="entry name" value="HisRS-like_core"/>
</dbReference>
<dbReference type="InterPro" id="IPR004516">
    <property type="entry name" value="HisRS/HisZ"/>
</dbReference>
<dbReference type="NCBIfam" id="TIGR00442">
    <property type="entry name" value="hisS"/>
    <property type="match status" value="1"/>
</dbReference>
<dbReference type="PANTHER" id="PTHR43707:SF1">
    <property type="entry name" value="HISTIDINE--TRNA LIGASE, MITOCHONDRIAL-RELATED"/>
    <property type="match status" value="1"/>
</dbReference>
<dbReference type="PANTHER" id="PTHR43707">
    <property type="entry name" value="HISTIDYL-TRNA SYNTHETASE"/>
    <property type="match status" value="1"/>
</dbReference>
<dbReference type="Pfam" id="PF03129">
    <property type="entry name" value="HGTP_anticodon"/>
    <property type="match status" value="1"/>
</dbReference>
<dbReference type="Pfam" id="PF13393">
    <property type="entry name" value="tRNA-synt_His"/>
    <property type="match status" value="1"/>
</dbReference>
<dbReference type="PIRSF" id="PIRSF001549">
    <property type="entry name" value="His-tRNA_synth"/>
    <property type="match status" value="1"/>
</dbReference>
<dbReference type="SUPFAM" id="SSF52954">
    <property type="entry name" value="Class II aaRS ABD-related"/>
    <property type="match status" value="1"/>
</dbReference>
<dbReference type="SUPFAM" id="SSF55681">
    <property type="entry name" value="Class II aaRS and biotin synthetases"/>
    <property type="match status" value="1"/>
</dbReference>
<dbReference type="PROSITE" id="PS50862">
    <property type="entry name" value="AA_TRNA_LIGASE_II"/>
    <property type="match status" value="1"/>
</dbReference>